<comment type="function">
    <text evidence="2">Catalyzes the reversible phosphorolytic breakdown of the N-glycosidic bond in the beta-(deoxy)ribonucleoside molecules, with the formation of the corresponding free purine bases and pentose-1-phosphate.</text>
</comment>
<comment type="catalytic activity">
    <reaction evidence="2">
        <text>a purine D-ribonucleoside + phosphate = a purine nucleobase + alpha-D-ribose 1-phosphate</text>
        <dbReference type="Rhea" id="RHEA:19805"/>
        <dbReference type="ChEBI" id="CHEBI:26386"/>
        <dbReference type="ChEBI" id="CHEBI:43474"/>
        <dbReference type="ChEBI" id="CHEBI:57720"/>
        <dbReference type="ChEBI" id="CHEBI:142355"/>
        <dbReference type="EC" id="2.4.2.1"/>
    </reaction>
</comment>
<comment type="catalytic activity">
    <reaction evidence="2">
        <text>a purine 2'-deoxy-D-ribonucleoside + phosphate = a purine nucleobase + 2-deoxy-alpha-D-ribose 1-phosphate</text>
        <dbReference type="Rhea" id="RHEA:36431"/>
        <dbReference type="ChEBI" id="CHEBI:26386"/>
        <dbReference type="ChEBI" id="CHEBI:43474"/>
        <dbReference type="ChEBI" id="CHEBI:57259"/>
        <dbReference type="ChEBI" id="CHEBI:142361"/>
        <dbReference type="EC" id="2.4.2.1"/>
    </reaction>
</comment>
<comment type="subunit">
    <text evidence="2">Homohexamer; trimer of homodimers.</text>
</comment>
<comment type="similarity">
    <text evidence="2">Belongs to the PNP/UDP phosphorylase family.</text>
</comment>
<organism>
    <name type="scientific">Citrobacter koseri (strain ATCC BAA-895 / CDC 4225-83 / SGSC4696)</name>
    <dbReference type="NCBI Taxonomy" id="290338"/>
    <lineage>
        <taxon>Bacteria</taxon>
        <taxon>Pseudomonadati</taxon>
        <taxon>Pseudomonadota</taxon>
        <taxon>Gammaproteobacteria</taxon>
        <taxon>Enterobacterales</taxon>
        <taxon>Enterobacteriaceae</taxon>
        <taxon>Citrobacter</taxon>
    </lineage>
</organism>
<dbReference type="EC" id="2.4.2.1" evidence="2"/>
<dbReference type="EMBL" id="CP000822">
    <property type="protein sequence ID" value="ABV14490.1"/>
    <property type="molecule type" value="Genomic_DNA"/>
</dbReference>
<dbReference type="RefSeq" id="WP_012134191.1">
    <property type="nucleotide sequence ID" value="NC_009792.1"/>
</dbReference>
<dbReference type="SMR" id="A8ALX7"/>
<dbReference type="STRING" id="290338.CKO_03407"/>
<dbReference type="GeneID" id="45137162"/>
<dbReference type="KEGG" id="cko:CKO_03407"/>
<dbReference type="HOGENOM" id="CLU_068457_2_0_6"/>
<dbReference type="OrthoDB" id="9782889at2"/>
<dbReference type="Proteomes" id="UP000008148">
    <property type="component" value="Chromosome"/>
</dbReference>
<dbReference type="GO" id="GO:0005829">
    <property type="term" value="C:cytosol"/>
    <property type="evidence" value="ECO:0007669"/>
    <property type="project" value="TreeGrafter"/>
</dbReference>
<dbReference type="GO" id="GO:0004731">
    <property type="term" value="F:purine-nucleoside phosphorylase activity"/>
    <property type="evidence" value="ECO:0007669"/>
    <property type="project" value="UniProtKB-UniRule"/>
</dbReference>
<dbReference type="GO" id="GO:0006152">
    <property type="term" value="P:purine nucleoside catabolic process"/>
    <property type="evidence" value="ECO:0007669"/>
    <property type="project" value="TreeGrafter"/>
</dbReference>
<dbReference type="CDD" id="cd09006">
    <property type="entry name" value="PNP_EcPNPI-like"/>
    <property type="match status" value="1"/>
</dbReference>
<dbReference type="FunFam" id="3.40.50.1580:FF:000002">
    <property type="entry name" value="Purine nucleoside phosphorylase DeoD-type"/>
    <property type="match status" value="1"/>
</dbReference>
<dbReference type="Gene3D" id="3.40.50.1580">
    <property type="entry name" value="Nucleoside phosphorylase domain"/>
    <property type="match status" value="1"/>
</dbReference>
<dbReference type="HAMAP" id="MF_01627">
    <property type="entry name" value="Pur_nucleosid_phosp"/>
    <property type="match status" value="1"/>
</dbReference>
<dbReference type="InterPro" id="IPR004402">
    <property type="entry name" value="DeoD-type"/>
</dbReference>
<dbReference type="InterPro" id="IPR018016">
    <property type="entry name" value="Nucleoside_phosphorylase_CS"/>
</dbReference>
<dbReference type="InterPro" id="IPR000845">
    <property type="entry name" value="Nucleoside_phosphorylase_d"/>
</dbReference>
<dbReference type="InterPro" id="IPR035994">
    <property type="entry name" value="Nucleoside_phosphorylase_sf"/>
</dbReference>
<dbReference type="NCBIfam" id="TIGR00107">
    <property type="entry name" value="deoD"/>
    <property type="match status" value="1"/>
</dbReference>
<dbReference type="NCBIfam" id="NF004489">
    <property type="entry name" value="PRK05819.1"/>
    <property type="match status" value="1"/>
</dbReference>
<dbReference type="NCBIfam" id="NF009914">
    <property type="entry name" value="PRK13374.1"/>
    <property type="match status" value="1"/>
</dbReference>
<dbReference type="PANTHER" id="PTHR43691:SF2">
    <property type="entry name" value="PURINE NUCLEOSIDE PHOSPHORYLASE DEOD-TYPE"/>
    <property type="match status" value="1"/>
</dbReference>
<dbReference type="PANTHER" id="PTHR43691">
    <property type="entry name" value="URIDINE PHOSPHORYLASE"/>
    <property type="match status" value="1"/>
</dbReference>
<dbReference type="Pfam" id="PF01048">
    <property type="entry name" value="PNP_UDP_1"/>
    <property type="match status" value="1"/>
</dbReference>
<dbReference type="SUPFAM" id="SSF53167">
    <property type="entry name" value="Purine and uridine phosphorylases"/>
    <property type="match status" value="1"/>
</dbReference>
<dbReference type="PROSITE" id="PS01232">
    <property type="entry name" value="PNP_UDP_1"/>
    <property type="match status" value="1"/>
</dbReference>
<protein>
    <recommendedName>
        <fullName evidence="2">Purine nucleoside phosphorylase DeoD-type</fullName>
        <shortName evidence="2">PNP</shortName>
        <ecNumber evidence="2">2.4.2.1</ecNumber>
    </recommendedName>
</protein>
<sequence length="239" mass="25918">MATPHINAEMGDFADVVLMPGDPLRAKHIAETFLEDVREVNNVRGMLGFTGTYKGRKISVMGHGMGIPSCSIYTKELITDFGVKKIIRVGSCGAVRNDVKLRDVVIGMGACTDSKVNRIRFKDHDFAAIADFDMVRNAVDAAKALGVDARVGNLFSADLFYSPDGEMFDVMEKYGILGVEMEAAGIYGVAAEFGAKALTICTVSDHIRTHEQTTAAERQTTFNDMIKIALESVLLGDKA</sequence>
<accession>A8ALX7</accession>
<reference key="1">
    <citation type="submission" date="2007-08" db="EMBL/GenBank/DDBJ databases">
        <authorList>
            <consortium name="The Citrobacter koseri Genome Sequencing Project"/>
            <person name="McClelland M."/>
            <person name="Sanderson E.K."/>
            <person name="Porwollik S."/>
            <person name="Spieth J."/>
            <person name="Clifton W.S."/>
            <person name="Latreille P."/>
            <person name="Courtney L."/>
            <person name="Wang C."/>
            <person name="Pepin K."/>
            <person name="Bhonagiri V."/>
            <person name="Nash W."/>
            <person name="Johnson M."/>
            <person name="Thiruvilangam P."/>
            <person name="Wilson R."/>
        </authorList>
    </citation>
    <scope>NUCLEOTIDE SEQUENCE [LARGE SCALE GENOMIC DNA]</scope>
    <source>
        <strain>ATCC BAA-895 / CDC 4225-83 / SGSC4696</strain>
    </source>
</reference>
<evidence type="ECO:0000250" key="1">
    <source>
        <dbReference type="UniProtKB" id="P50389"/>
    </source>
</evidence>
<evidence type="ECO:0000255" key="2">
    <source>
        <dbReference type="HAMAP-Rule" id="MF_01627"/>
    </source>
</evidence>
<feature type="chain" id="PRO_1000069620" description="Purine nucleoside phosphorylase DeoD-type">
    <location>
        <begin position="1"/>
        <end position="239"/>
    </location>
</feature>
<feature type="active site" description="Proton donor" evidence="2">
    <location>
        <position position="205"/>
    </location>
</feature>
<feature type="binding site" evidence="1">
    <location>
        <position position="5"/>
    </location>
    <ligand>
        <name>a purine D-ribonucleoside</name>
        <dbReference type="ChEBI" id="CHEBI:142355"/>
        <note>ligand shared between dimeric partners</note>
    </ligand>
</feature>
<feature type="binding site" description="in other chain" evidence="1">
    <location>
        <position position="21"/>
    </location>
    <ligand>
        <name>phosphate</name>
        <dbReference type="ChEBI" id="CHEBI:43474"/>
        <note>ligand shared between dimeric partners</note>
    </ligand>
</feature>
<feature type="binding site" description="in other chain" evidence="1">
    <location>
        <position position="25"/>
    </location>
    <ligand>
        <name>phosphate</name>
        <dbReference type="ChEBI" id="CHEBI:43474"/>
        <note>ligand shared between dimeric partners</note>
    </ligand>
</feature>
<feature type="binding site" evidence="1">
    <location>
        <position position="44"/>
    </location>
    <ligand>
        <name>phosphate</name>
        <dbReference type="ChEBI" id="CHEBI:43474"/>
        <note>ligand shared between dimeric partners</note>
    </ligand>
</feature>
<feature type="binding site" description="in other chain" evidence="1">
    <location>
        <begin position="88"/>
        <end position="91"/>
    </location>
    <ligand>
        <name>phosphate</name>
        <dbReference type="ChEBI" id="CHEBI:43474"/>
        <note>ligand shared between dimeric partners</note>
    </ligand>
</feature>
<feature type="binding site" description="in other chain" evidence="1">
    <location>
        <begin position="180"/>
        <end position="182"/>
    </location>
    <ligand>
        <name>a purine D-ribonucleoside</name>
        <dbReference type="ChEBI" id="CHEBI:142355"/>
        <note>ligand shared between dimeric partners</note>
    </ligand>
</feature>
<feature type="binding site" description="in other chain" evidence="1">
    <location>
        <begin position="204"/>
        <end position="205"/>
    </location>
    <ligand>
        <name>a purine D-ribonucleoside</name>
        <dbReference type="ChEBI" id="CHEBI:142355"/>
        <note>ligand shared between dimeric partners</note>
    </ligand>
</feature>
<feature type="site" description="Important for catalytic activity" evidence="2">
    <location>
        <position position="218"/>
    </location>
</feature>
<gene>
    <name evidence="2" type="primary">deoD</name>
    <name type="ordered locus">CKO_03407</name>
</gene>
<keyword id="KW-0328">Glycosyltransferase</keyword>
<keyword id="KW-1185">Reference proteome</keyword>
<keyword id="KW-0808">Transferase</keyword>
<proteinExistence type="inferred from homology"/>
<name>DEOD_CITK8</name>